<proteinExistence type="inferred from homology"/>
<reference key="1">
    <citation type="journal article" date="2011" name="Proc. Natl. Acad. Sci. U.S.A.">
        <title>Genomic anatomy of Escherichia coli O157:H7 outbreaks.</title>
        <authorList>
            <person name="Eppinger M."/>
            <person name="Mammel M.K."/>
            <person name="Leclerc J.E."/>
            <person name="Ravel J."/>
            <person name="Cebula T.A."/>
        </authorList>
    </citation>
    <scope>NUCLEOTIDE SEQUENCE [LARGE SCALE GENOMIC DNA]</scope>
    <source>
        <strain>EC4115 / EHEC</strain>
    </source>
</reference>
<organism>
    <name type="scientific">Escherichia coli O157:H7 (strain EC4115 / EHEC)</name>
    <dbReference type="NCBI Taxonomy" id="444450"/>
    <lineage>
        <taxon>Bacteria</taxon>
        <taxon>Pseudomonadati</taxon>
        <taxon>Pseudomonadota</taxon>
        <taxon>Gammaproteobacteria</taxon>
        <taxon>Enterobacterales</taxon>
        <taxon>Enterobacteriaceae</taxon>
        <taxon>Escherichia</taxon>
    </lineage>
</organism>
<keyword id="KW-0997">Cell inner membrane</keyword>
<keyword id="KW-1003">Cell membrane</keyword>
<keyword id="KW-0378">Hydrolase</keyword>
<keyword id="KW-0441">Lipid A biosynthesis</keyword>
<keyword id="KW-0444">Lipid biosynthesis</keyword>
<keyword id="KW-0443">Lipid metabolism</keyword>
<keyword id="KW-0464">Manganese</keyword>
<keyword id="KW-0472">Membrane</keyword>
<keyword id="KW-0479">Metal-binding</keyword>
<name>LPXH_ECO5E</name>
<accession>B5YPN9</accession>
<feature type="chain" id="PRO_1000129518" description="UDP-2,3-diacylglucosamine hydrolase">
    <location>
        <begin position="1"/>
        <end position="240"/>
    </location>
</feature>
<feature type="binding site" evidence="1">
    <location>
        <position position="8"/>
    </location>
    <ligand>
        <name>Mn(2+)</name>
        <dbReference type="ChEBI" id="CHEBI:29035"/>
        <label>1</label>
    </ligand>
</feature>
<feature type="binding site" evidence="1">
    <location>
        <position position="10"/>
    </location>
    <ligand>
        <name>Mn(2+)</name>
        <dbReference type="ChEBI" id="CHEBI:29035"/>
        <label>1</label>
    </ligand>
</feature>
<feature type="binding site" evidence="1">
    <location>
        <position position="41"/>
    </location>
    <ligand>
        <name>Mn(2+)</name>
        <dbReference type="ChEBI" id="CHEBI:29035"/>
        <label>1</label>
    </ligand>
</feature>
<feature type="binding site" evidence="1">
    <location>
        <position position="41"/>
    </location>
    <ligand>
        <name>Mn(2+)</name>
        <dbReference type="ChEBI" id="CHEBI:29035"/>
        <label>2</label>
    </ligand>
</feature>
<feature type="binding site" evidence="1">
    <location>
        <begin position="79"/>
        <end position="80"/>
    </location>
    <ligand>
        <name>substrate</name>
    </ligand>
</feature>
<feature type="binding site" evidence="1">
    <location>
        <position position="79"/>
    </location>
    <ligand>
        <name>Mn(2+)</name>
        <dbReference type="ChEBI" id="CHEBI:29035"/>
        <label>2</label>
    </ligand>
</feature>
<feature type="binding site" evidence="1">
    <location>
        <position position="114"/>
    </location>
    <ligand>
        <name>Mn(2+)</name>
        <dbReference type="ChEBI" id="CHEBI:29035"/>
        <label>2</label>
    </ligand>
</feature>
<feature type="binding site" evidence="1">
    <location>
        <position position="122"/>
    </location>
    <ligand>
        <name>substrate</name>
    </ligand>
</feature>
<feature type="binding site" evidence="1">
    <location>
        <position position="160"/>
    </location>
    <ligand>
        <name>substrate</name>
    </ligand>
</feature>
<feature type="binding site" evidence="1">
    <location>
        <position position="164"/>
    </location>
    <ligand>
        <name>substrate</name>
    </ligand>
</feature>
<feature type="binding site" evidence="1">
    <location>
        <position position="167"/>
    </location>
    <ligand>
        <name>substrate</name>
    </ligand>
</feature>
<feature type="binding site" evidence="1">
    <location>
        <position position="195"/>
    </location>
    <ligand>
        <name>Mn(2+)</name>
        <dbReference type="ChEBI" id="CHEBI:29035"/>
        <label>2</label>
    </ligand>
</feature>
<feature type="binding site" evidence="1">
    <location>
        <position position="195"/>
    </location>
    <ligand>
        <name>substrate</name>
    </ligand>
</feature>
<feature type="binding site" evidence="1">
    <location>
        <position position="197"/>
    </location>
    <ligand>
        <name>Mn(2+)</name>
        <dbReference type="ChEBI" id="CHEBI:29035"/>
        <label>1</label>
    </ligand>
</feature>
<protein>
    <recommendedName>
        <fullName evidence="1">UDP-2,3-diacylglucosamine hydrolase</fullName>
        <ecNumber evidence="1">3.6.1.54</ecNumber>
    </recommendedName>
    <alternativeName>
        <fullName evidence="1">UDP-2,3-diacylglucosamine diphosphatase</fullName>
    </alternativeName>
</protein>
<sequence>MATLFIADLHLCVEEPAITAGFLRFLAGEARKADALYILGDLFEAWIGDDDPNPLHRQMAAAIKAVSDSGVPCYFIHGNRDFLLGKRFARESGMTLLPEEKVLELYGRRVLIMHGDTLCTDDAGYQAFRTKVHKPWLQTLFLALPLFVRKRIAVRMRANSKEANSSKSLAIMDVNQNAVVSAMEKHQVQWLIHGHTHRPAVHELIANQQPAFRVVLGAWHTEGSMVKVTADDVELIHFPF</sequence>
<evidence type="ECO:0000255" key="1">
    <source>
        <dbReference type="HAMAP-Rule" id="MF_00575"/>
    </source>
</evidence>
<gene>
    <name evidence="1" type="primary">lpxH</name>
    <name type="ordered locus">ECH74115_0625</name>
</gene>
<comment type="function">
    <text evidence="1">Hydrolyzes the pyrophosphate bond of UDP-2,3-diacylglucosamine to yield 2,3-diacylglucosamine 1-phosphate (lipid X) and UMP by catalyzing the attack of water at the alpha-P atom. Involved in the biosynthesis of lipid A, a phosphorylated glycolipid that anchors the lipopolysaccharide to the outer membrane of the cell.</text>
</comment>
<comment type="catalytic activity">
    <reaction evidence="1">
        <text>UDP-2-N,3-O-bis[(3R)-3-hydroxytetradecanoyl]-alpha-D-glucosamine + H2O = 2-N,3-O-bis[(3R)-3-hydroxytetradecanoyl]-alpha-D-glucosaminyl 1-phosphate + UMP + 2 H(+)</text>
        <dbReference type="Rhea" id="RHEA:25213"/>
        <dbReference type="ChEBI" id="CHEBI:15377"/>
        <dbReference type="ChEBI" id="CHEBI:15378"/>
        <dbReference type="ChEBI" id="CHEBI:57865"/>
        <dbReference type="ChEBI" id="CHEBI:57957"/>
        <dbReference type="ChEBI" id="CHEBI:78847"/>
        <dbReference type="EC" id="3.6.1.54"/>
    </reaction>
</comment>
<comment type="cofactor">
    <cofactor evidence="1">
        <name>Mn(2+)</name>
        <dbReference type="ChEBI" id="CHEBI:29035"/>
    </cofactor>
    <text evidence="1">Binds 2 Mn(2+) ions per subunit in a binuclear metal center.</text>
</comment>
<comment type="pathway">
    <text evidence="1">Glycolipid biosynthesis; lipid IV(A) biosynthesis; lipid IV(A) from (3R)-3-hydroxytetradecanoyl-[acyl-carrier-protein] and UDP-N-acetyl-alpha-D-glucosamine: step 4/6.</text>
</comment>
<comment type="subcellular location">
    <subcellularLocation>
        <location evidence="1">Cell inner membrane</location>
        <topology evidence="1">Peripheral membrane protein</topology>
        <orientation evidence="1">Cytoplasmic side</orientation>
    </subcellularLocation>
</comment>
<comment type="similarity">
    <text evidence="1">Belongs to the LpxH family.</text>
</comment>
<dbReference type="EC" id="3.6.1.54" evidence="1"/>
<dbReference type="EMBL" id="CP001164">
    <property type="protein sequence ID" value="ACI37743.1"/>
    <property type="molecule type" value="Genomic_DNA"/>
</dbReference>
<dbReference type="RefSeq" id="WP_000212254.1">
    <property type="nucleotide sequence ID" value="NC_011353.1"/>
</dbReference>
<dbReference type="SMR" id="B5YPN9"/>
<dbReference type="KEGG" id="ecf:ECH74115_0625"/>
<dbReference type="HOGENOM" id="CLU_074586_0_0_6"/>
<dbReference type="UniPathway" id="UPA00359">
    <property type="reaction ID" value="UER00480"/>
</dbReference>
<dbReference type="GO" id="GO:0005737">
    <property type="term" value="C:cytoplasm"/>
    <property type="evidence" value="ECO:0007669"/>
    <property type="project" value="InterPro"/>
</dbReference>
<dbReference type="GO" id="GO:0019897">
    <property type="term" value="C:extrinsic component of plasma membrane"/>
    <property type="evidence" value="ECO:0007669"/>
    <property type="project" value="UniProtKB-UniRule"/>
</dbReference>
<dbReference type="GO" id="GO:0030145">
    <property type="term" value="F:manganese ion binding"/>
    <property type="evidence" value="ECO:0007669"/>
    <property type="project" value="UniProtKB-UniRule"/>
</dbReference>
<dbReference type="GO" id="GO:0008758">
    <property type="term" value="F:UDP-2,3-diacylglucosamine hydrolase activity"/>
    <property type="evidence" value="ECO:0007669"/>
    <property type="project" value="UniProtKB-UniRule"/>
</dbReference>
<dbReference type="GO" id="GO:0009245">
    <property type="term" value="P:lipid A biosynthetic process"/>
    <property type="evidence" value="ECO:0007669"/>
    <property type="project" value="UniProtKB-UniRule"/>
</dbReference>
<dbReference type="CDD" id="cd07398">
    <property type="entry name" value="MPP_YbbF-LpxH"/>
    <property type="match status" value="1"/>
</dbReference>
<dbReference type="FunFam" id="3.60.21.10:FF:000012">
    <property type="entry name" value="UDP-2,3-diacylglucosamine hydrolase"/>
    <property type="match status" value="1"/>
</dbReference>
<dbReference type="Gene3D" id="3.60.21.10">
    <property type="match status" value="1"/>
</dbReference>
<dbReference type="HAMAP" id="MF_00575">
    <property type="entry name" value="LpxH"/>
    <property type="match status" value="1"/>
</dbReference>
<dbReference type="InterPro" id="IPR004843">
    <property type="entry name" value="Calcineurin-like_PHP_ApaH"/>
</dbReference>
<dbReference type="InterPro" id="IPR043461">
    <property type="entry name" value="LpxH-like"/>
</dbReference>
<dbReference type="InterPro" id="IPR029052">
    <property type="entry name" value="Metallo-depent_PP-like"/>
</dbReference>
<dbReference type="InterPro" id="IPR010138">
    <property type="entry name" value="UDP-diacylglucosamine_Hdrlase"/>
</dbReference>
<dbReference type="NCBIfam" id="TIGR01854">
    <property type="entry name" value="lipid_A_lpxH"/>
    <property type="match status" value="1"/>
</dbReference>
<dbReference type="NCBIfam" id="NF003743">
    <property type="entry name" value="PRK05340.1"/>
    <property type="match status" value="1"/>
</dbReference>
<dbReference type="PANTHER" id="PTHR34990:SF1">
    <property type="entry name" value="UDP-2,3-DIACYLGLUCOSAMINE HYDROLASE"/>
    <property type="match status" value="1"/>
</dbReference>
<dbReference type="PANTHER" id="PTHR34990">
    <property type="entry name" value="UDP-2,3-DIACYLGLUCOSAMINE HYDROLASE-RELATED"/>
    <property type="match status" value="1"/>
</dbReference>
<dbReference type="Pfam" id="PF00149">
    <property type="entry name" value="Metallophos"/>
    <property type="match status" value="1"/>
</dbReference>
<dbReference type="SUPFAM" id="SSF56300">
    <property type="entry name" value="Metallo-dependent phosphatases"/>
    <property type="match status" value="1"/>
</dbReference>